<dbReference type="EC" id="3.1.-.-" evidence="1"/>
<dbReference type="EMBL" id="CP000262">
    <property type="protein sequence ID" value="ABF37337.1"/>
    <property type="status" value="ALT_INIT"/>
    <property type="molecule type" value="Genomic_DNA"/>
</dbReference>
<dbReference type="SMR" id="Q1J824"/>
<dbReference type="KEGG" id="spi:MGAS10750_Spy0387"/>
<dbReference type="HOGENOM" id="CLU_106710_3_0_9"/>
<dbReference type="Proteomes" id="UP000002434">
    <property type="component" value="Chromosome"/>
</dbReference>
<dbReference type="GO" id="GO:0005737">
    <property type="term" value="C:cytoplasm"/>
    <property type="evidence" value="ECO:0007669"/>
    <property type="project" value="UniProtKB-SubCell"/>
</dbReference>
<dbReference type="GO" id="GO:0004222">
    <property type="term" value="F:metalloendopeptidase activity"/>
    <property type="evidence" value="ECO:0007669"/>
    <property type="project" value="InterPro"/>
</dbReference>
<dbReference type="GO" id="GO:0004521">
    <property type="term" value="F:RNA endonuclease activity"/>
    <property type="evidence" value="ECO:0007669"/>
    <property type="project" value="UniProtKB-UniRule"/>
</dbReference>
<dbReference type="GO" id="GO:0008270">
    <property type="term" value="F:zinc ion binding"/>
    <property type="evidence" value="ECO:0007669"/>
    <property type="project" value="UniProtKB-UniRule"/>
</dbReference>
<dbReference type="GO" id="GO:0006364">
    <property type="term" value="P:rRNA processing"/>
    <property type="evidence" value="ECO:0007669"/>
    <property type="project" value="UniProtKB-UniRule"/>
</dbReference>
<dbReference type="Gene3D" id="3.40.390.30">
    <property type="entry name" value="Metalloproteases ('zincins'), catalytic domain"/>
    <property type="match status" value="1"/>
</dbReference>
<dbReference type="HAMAP" id="MF_00009">
    <property type="entry name" value="Endoribonucl_YbeY"/>
    <property type="match status" value="1"/>
</dbReference>
<dbReference type="InterPro" id="IPR023091">
    <property type="entry name" value="MetalPrtase_cat_dom_sf_prd"/>
</dbReference>
<dbReference type="InterPro" id="IPR002036">
    <property type="entry name" value="YbeY"/>
</dbReference>
<dbReference type="InterPro" id="IPR020549">
    <property type="entry name" value="YbeY_CS"/>
</dbReference>
<dbReference type="NCBIfam" id="TIGR00043">
    <property type="entry name" value="rRNA maturation RNase YbeY"/>
    <property type="match status" value="1"/>
</dbReference>
<dbReference type="PANTHER" id="PTHR46986">
    <property type="entry name" value="ENDORIBONUCLEASE YBEY, CHLOROPLASTIC"/>
    <property type="match status" value="1"/>
</dbReference>
<dbReference type="PANTHER" id="PTHR46986:SF1">
    <property type="entry name" value="ENDORIBONUCLEASE YBEY, CHLOROPLASTIC"/>
    <property type="match status" value="1"/>
</dbReference>
<dbReference type="Pfam" id="PF02130">
    <property type="entry name" value="YbeY"/>
    <property type="match status" value="1"/>
</dbReference>
<dbReference type="SUPFAM" id="SSF55486">
    <property type="entry name" value="Metalloproteases ('zincins'), catalytic domain"/>
    <property type="match status" value="1"/>
</dbReference>
<dbReference type="PROSITE" id="PS01306">
    <property type="entry name" value="UPF0054"/>
    <property type="match status" value="1"/>
</dbReference>
<organism>
    <name type="scientific">Streptococcus pyogenes serotype M4 (strain MGAS10750)</name>
    <dbReference type="NCBI Taxonomy" id="370554"/>
    <lineage>
        <taxon>Bacteria</taxon>
        <taxon>Bacillati</taxon>
        <taxon>Bacillota</taxon>
        <taxon>Bacilli</taxon>
        <taxon>Lactobacillales</taxon>
        <taxon>Streptococcaceae</taxon>
        <taxon>Streptococcus</taxon>
    </lineage>
</organism>
<protein>
    <recommendedName>
        <fullName evidence="1">Endoribonuclease YbeY</fullName>
        <ecNumber evidence="1">3.1.-.-</ecNumber>
    </recommendedName>
</protein>
<proteinExistence type="inferred from homology"/>
<name>YBEY_STRPF</name>
<gene>
    <name evidence="1" type="primary">ybeY</name>
    <name type="ordered locus">MGAS10750_Spy0387</name>
</gene>
<sequence>MYIEMIDETGQVSQEIMEQTLDLLNFAAQKTGKEEKEMSVTFVTNERSHELNLEYRDTDRPTDVISLEYKPETPILFSQEDLAADPSLAEMMAEFDAYIGELFISIDKAREQSQEYGHSFEREMGFLAVHGFLHINGYDHYTLEEEKEMFTLQEEILTAYGLTRQ</sequence>
<evidence type="ECO:0000255" key="1">
    <source>
        <dbReference type="HAMAP-Rule" id="MF_00009"/>
    </source>
</evidence>
<evidence type="ECO:0000305" key="2"/>
<accession>Q1J824</accession>
<keyword id="KW-0963">Cytoplasm</keyword>
<keyword id="KW-0255">Endonuclease</keyword>
<keyword id="KW-0378">Hydrolase</keyword>
<keyword id="KW-0479">Metal-binding</keyword>
<keyword id="KW-0540">Nuclease</keyword>
<keyword id="KW-0690">Ribosome biogenesis</keyword>
<keyword id="KW-0698">rRNA processing</keyword>
<keyword id="KW-0862">Zinc</keyword>
<comment type="function">
    <text evidence="1">Single strand-specific metallo-endoribonuclease involved in late-stage 70S ribosome quality control and in maturation of the 3' terminus of the 16S rRNA.</text>
</comment>
<comment type="cofactor">
    <cofactor evidence="1">
        <name>Zn(2+)</name>
        <dbReference type="ChEBI" id="CHEBI:29105"/>
    </cofactor>
    <text evidence="1">Binds 1 zinc ion.</text>
</comment>
<comment type="subcellular location">
    <subcellularLocation>
        <location evidence="1">Cytoplasm</location>
    </subcellularLocation>
</comment>
<comment type="similarity">
    <text evidence="1">Belongs to the endoribonuclease YbeY family.</text>
</comment>
<comment type="sequence caution" evidence="2">
    <conflict type="erroneous initiation">
        <sequence resource="EMBL-CDS" id="ABF37337"/>
    </conflict>
</comment>
<feature type="chain" id="PRO_0000284330" description="Endoribonuclease YbeY">
    <location>
        <begin position="1"/>
        <end position="165"/>
    </location>
</feature>
<feature type="binding site" evidence="1">
    <location>
        <position position="130"/>
    </location>
    <ligand>
        <name>Zn(2+)</name>
        <dbReference type="ChEBI" id="CHEBI:29105"/>
        <note>catalytic</note>
    </ligand>
</feature>
<feature type="binding site" evidence="1">
    <location>
        <position position="134"/>
    </location>
    <ligand>
        <name>Zn(2+)</name>
        <dbReference type="ChEBI" id="CHEBI:29105"/>
        <note>catalytic</note>
    </ligand>
</feature>
<feature type="binding site" evidence="1">
    <location>
        <position position="140"/>
    </location>
    <ligand>
        <name>Zn(2+)</name>
        <dbReference type="ChEBI" id="CHEBI:29105"/>
        <note>catalytic</note>
    </ligand>
</feature>
<reference key="1">
    <citation type="journal article" date="2006" name="Proc. Natl. Acad. Sci. U.S.A.">
        <title>Molecular genetic anatomy of inter- and intraserotype variation in the human bacterial pathogen group A Streptococcus.</title>
        <authorList>
            <person name="Beres S.B."/>
            <person name="Richter E.W."/>
            <person name="Nagiec M.J."/>
            <person name="Sumby P."/>
            <person name="Porcella S.F."/>
            <person name="DeLeo F.R."/>
            <person name="Musser J.M."/>
        </authorList>
    </citation>
    <scope>NUCLEOTIDE SEQUENCE [LARGE SCALE GENOMIC DNA]</scope>
    <source>
        <strain>MGAS10750</strain>
    </source>
</reference>